<gene>
    <name evidence="1" type="primary">clpS</name>
    <name type="ordered locus">ML1165</name>
    <name type="ORF">B1549_C2_207</name>
</gene>
<evidence type="ECO:0000255" key="1">
    <source>
        <dbReference type="HAMAP-Rule" id="MF_00302"/>
    </source>
</evidence>
<evidence type="ECO:0000305" key="2"/>
<comment type="function">
    <text evidence="1">Involved in the modulation of the specificity of the ClpAP-mediated ATP-dependent protein degradation.</text>
</comment>
<comment type="subunit">
    <text evidence="1">Binds to the N-terminal domain of the chaperone ClpA.</text>
</comment>
<comment type="similarity">
    <text evidence="1">Belongs to the ClpS family.</text>
</comment>
<comment type="sequence caution" evidence="2">
    <conflict type="erroneous initiation">
        <sequence resource="EMBL-CDS" id="AAA50888"/>
    </conflict>
</comment>
<sequence>MWVMVVTLAPIEPKVRPNTTWQHESAPVDITAARWVTIVWDDPVNLMAYVTYVFQKLFGYSEPHATKLMLQVHNEGKAVVSMGSRESMEVDVSKLHAAGLWATMQQDR</sequence>
<proteinExistence type="inferred from homology"/>
<keyword id="KW-1185">Reference proteome</keyword>
<feature type="chain" id="PRO_0000215724" description="ATP-dependent Clp protease adapter protein ClpS">
    <location>
        <begin position="1"/>
        <end position="108"/>
    </location>
</feature>
<accession>P53423</accession>
<accession>Q9CC75</accession>
<organism>
    <name type="scientific">Mycobacterium leprae (strain TN)</name>
    <dbReference type="NCBI Taxonomy" id="272631"/>
    <lineage>
        <taxon>Bacteria</taxon>
        <taxon>Bacillati</taxon>
        <taxon>Actinomycetota</taxon>
        <taxon>Actinomycetes</taxon>
        <taxon>Mycobacteriales</taxon>
        <taxon>Mycobacteriaceae</taxon>
        <taxon>Mycobacterium</taxon>
    </lineage>
</organism>
<protein>
    <recommendedName>
        <fullName evidence="1">ATP-dependent Clp protease adapter protein ClpS</fullName>
    </recommendedName>
</protein>
<dbReference type="EMBL" id="U00014">
    <property type="protein sequence ID" value="AAA50888.1"/>
    <property type="status" value="ALT_INIT"/>
    <property type="molecule type" value="Genomic_DNA"/>
</dbReference>
<dbReference type="EMBL" id="AL583921">
    <property type="protein sequence ID" value="CAC31546.1"/>
    <property type="molecule type" value="Genomic_DNA"/>
</dbReference>
<dbReference type="PIR" id="G87054">
    <property type="entry name" value="G87054"/>
</dbReference>
<dbReference type="PIR" id="S72796">
    <property type="entry name" value="S72796"/>
</dbReference>
<dbReference type="RefSeq" id="NP_301850.1">
    <property type="nucleotide sequence ID" value="NC_002677.1"/>
</dbReference>
<dbReference type="SMR" id="P53423"/>
<dbReference type="STRING" id="272631.gene:17574995"/>
<dbReference type="KEGG" id="mle:ML1165"/>
<dbReference type="PATRIC" id="fig|272631.5.peg.2120"/>
<dbReference type="Leproma" id="ML1165"/>
<dbReference type="eggNOG" id="COG2127">
    <property type="taxonomic scope" value="Bacteria"/>
</dbReference>
<dbReference type="HOGENOM" id="CLU_153743_1_0_11"/>
<dbReference type="OrthoDB" id="162238at2"/>
<dbReference type="Proteomes" id="UP000000806">
    <property type="component" value="Chromosome"/>
</dbReference>
<dbReference type="GO" id="GO:0030163">
    <property type="term" value="P:protein catabolic process"/>
    <property type="evidence" value="ECO:0007669"/>
    <property type="project" value="InterPro"/>
</dbReference>
<dbReference type="GO" id="GO:0006508">
    <property type="term" value="P:proteolysis"/>
    <property type="evidence" value="ECO:0007669"/>
    <property type="project" value="UniProtKB-UniRule"/>
</dbReference>
<dbReference type="Gene3D" id="3.30.1390.10">
    <property type="match status" value="1"/>
</dbReference>
<dbReference type="HAMAP" id="MF_00302">
    <property type="entry name" value="ClpS"/>
    <property type="match status" value="1"/>
</dbReference>
<dbReference type="InterPro" id="IPR022935">
    <property type="entry name" value="ClpS"/>
</dbReference>
<dbReference type="InterPro" id="IPR003769">
    <property type="entry name" value="ClpS_core"/>
</dbReference>
<dbReference type="InterPro" id="IPR014719">
    <property type="entry name" value="Ribosomal_bL12_C/ClpS-like"/>
</dbReference>
<dbReference type="NCBIfam" id="NF000668">
    <property type="entry name" value="PRK00033.1-1"/>
    <property type="match status" value="1"/>
</dbReference>
<dbReference type="Pfam" id="PF02617">
    <property type="entry name" value="ClpS"/>
    <property type="match status" value="1"/>
</dbReference>
<dbReference type="SUPFAM" id="SSF54736">
    <property type="entry name" value="ClpS-like"/>
    <property type="match status" value="1"/>
</dbReference>
<reference key="1">
    <citation type="submission" date="1994-09" db="EMBL/GenBank/DDBJ databases">
        <authorList>
            <person name="Smith D.R."/>
            <person name="Robison K."/>
        </authorList>
    </citation>
    <scope>NUCLEOTIDE SEQUENCE [GENOMIC DNA]</scope>
</reference>
<reference key="2">
    <citation type="journal article" date="2001" name="Nature">
        <title>Massive gene decay in the leprosy bacillus.</title>
        <authorList>
            <person name="Cole S.T."/>
            <person name="Eiglmeier K."/>
            <person name="Parkhill J."/>
            <person name="James K.D."/>
            <person name="Thomson N.R."/>
            <person name="Wheeler P.R."/>
            <person name="Honore N."/>
            <person name="Garnier T."/>
            <person name="Churcher C.M."/>
            <person name="Harris D.E."/>
            <person name="Mungall K.L."/>
            <person name="Basham D."/>
            <person name="Brown D."/>
            <person name="Chillingworth T."/>
            <person name="Connor R."/>
            <person name="Davies R.M."/>
            <person name="Devlin K."/>
            <person name="Duthoy S."/>
            <person name="Feltwell T."/>
            <person name="Fraser A."/>
            <person name="Hamlin N."/>
            <person name="Holroyd S."/>
            <person name="Hornsby T."/>
            <person name="Jagels K."/>
            <person name="Lacroix C."/>
            <person name="Maclean J."/>
            <person name="Moule S."/>
            <person name="Murphy L.D."/>
            <person name="Oliver K."/>
            <person name="Quail M.A."/>
            <person name="Rajandream M.A."/>
            <person name="Rutherford K.M."/>
            <person name="Rutter S."/>
            <person name="Seeger K."/>
            <person name="Simon S."/>
            <person name="Simmonds M."/>
            <person name="Skelton J."/>
            <person name="Squares R."/>
            <person name="Squares S."/>
            <person name="Stevens K."/>
            <person name="Taylor K."/>
            <person name="Whitehead S."/>
            <person name="Woodward J.R."/>
            <person name="Barrell B.G."/>
        </authorList>
    </citation>
    <scope>NUCLEOTIDE SEQUENCE [LARGE SCALE GENOMIC DNA]</scope>
    <source>
        <strain>TN</strain>
    </source>
</reference>
<name>CLPS_MYCLE</name>